<name>CCD1_LOTGI</name>
<accession>B3A0Q3</accession>
<feature type="signal peptide" evidence="1">
    <location>
        <begin position="1"/>
        <end position="21"/>
    </location>
</feature>
<feature type="chain" id="PRO_0000415243" description="Coiled-coil domain-containing protein 1" evidence="1">
    <location>
        <begin position="22"/>
        <end position="396"/>
    </location>
</feature>
<feature type="region of interest" description="Disordered" evidence="2">
    <location>
        <begin position="231"/>
        <end position="260"/>
    </location>
</feature>
<feature type="region of interest" description="Disordered" evidence="2">
    <location>
        <begin position="288"/>
        <end position="378"/>
    </location>
</feature>
<feature type="coiled-coil region" evidence="1">
    <location>
        <begin position="53"/>
        <end position="73"/>
    </location>
</feature>
<feature type="coiled-coil region" evidence="1">
    <location>
        <begin position="109"/>
        <end position="129"/>
    </location>
</feature>
<feature type="coiled-coil region" evidence="1">
    <location>
        <begin position="208"/>
        <end position="242"/>
    </location>
</feature>
<feature type="coiled-coil region" evidence="1">
    <location>
        <begin position="287"/>
        <end position="308"/>
    </location>
</feature>
<feature type="compositionally biased region" description="Acidic residues" evidence="2">
    <location>
        <begin position="231"/>
        <end position="256"/>
    </location>
</feature>
<keyword id="KW-0175">Coiled coil</keyword>
<keyword id="KW-0903">Direct protein sequencing</keyword>
<keyword id="KW-0964">Secreted</keyword>
<keyword id="KW-0732">Signal</keyword>
<protein>
    <recommendedName>
        <fullName>Coiled-coil domain-containing protein 1</fullName>
    </recommendedName>
    <alternativeName>
        <fullName>Aspartate-rich protein</fullName>
    </alternativeName>
</protein>
<comment type="subcellular location">
    <subcellularLocation>
        <location evidence="3">Secreted</location>
    </subcellularLocation>
</comment>
<comment type="tissue specificity">
    <text evidence="3">Component of the acid-insoluble and acid-soluble organic matrix of calcified layers of the shell (at protein level).</text>
</comment>
<sequence length="396" mass="44636">MAARSALCFLAIITLFVYACGRPALNFNSIYKDSRSSVKHFPRVTDSRYAYTKIDSKLDSILSELQKEQNDRDDDDDDDDEDDLFDEINDIFDDVMDDDIEEDGDDIHEVEKIEEAVDDVIDMIDDIIDDDADDDSDDVPEDLNDAQEDILELIKDSNDDKNDDETSDIIDDILDIVEDAKDADDHRPIADIRVVESLSKPGAVAEDDKESKKIDETVQELLDEIKDVVEDANDDVNDILDTDDEDEDEDVQEEKDEDIHEDVGNVMVNLMHGVHGVTGGGVNHDIYEEIEEKMDEVDDFIDDAIDEHNDDDVNDDENDDVYDEHDDLVDDVNDDADDDNDDADDDNDDADDDNDDSDDNDDSDDDNDDDDIDDVADDVLEVIVDAVEAMNTPTNV</sequence>
<reference evidence="5" key="1">
    <citation type="submission" date="2007-12" db="EMBL/GenBank/DDBJ databases">
        <title>DOE Joint Genome Institute Lottia gigantea EST project.</title>
        <authorList>
            <person name="Richardson P."/>
            <person name="Lucas S."/>
            <person name="Rokhsar D."/>
            <person name="Wang M."/>
            <person name="Lindquist E.A."/>
        </authorList>
    </citation>
    <scope>NUCLEOTIDE SEQUENCE [LARGE SCALE MRNA]</scope>
    <scope>IDENTIFICATION</scope>
    <source>
        <tissue evidence="4">Mantle</tissue>
    </source>
</reference>
<reference key="2">
    <citation type="journal article" date="2013" name="FEBS J.">
        <title>The shell-forming proteome of Lottia gigantea reveals both deep conservations and lineage-specific novelties.</title>
        <authorList>
            <person name="Marie B."/>
            <person name="Jackson D.J."/>
            <person name="Ramos-Silva P."/>
            <person name="Zanella-Cleon I."/>
            <person name="Guichard N."/>
            <person name="Marin F."/>
        </authorList>
    </citation>
    <scope>PROTEIN SEQUENCE OF 36-43; 49-67 AND 182-212</scope>
    <scope>SUBCELLULAR LOCATION</scope>
    <scope>TISSUE SPECIFICITY</scope>
    <source>
        <tissue>Shell</tissue>
    </source>
</reference>
<dbReference type="EMBL" id="FC615637">
    <property type="status" value="NOT_ANNOTATED_CDS"/>
    <property type="molecule type" value="mRNA"/>
</dbReference>
<dbReference type="EMBL" id="FC628703">
    <property type="status" value="NOT_ANNOTATED_CDS"/>
    <property type="molecule type" value="mRNA"/>
</dbReference>
<dbReference type="GO" id="GO:0005576">
    <property type="term" value="C:extracellular region"/>
    <property type="evidence" value="ECO:0007669"/>
    <property type="project" value="UniProtKB-SubCell"/>
</dbReference>
<evidence type="ECO:0000255" key="1"/>
<evidence type="ECO:0000256" key="2">
    <source>
        <dbReference type="SAM" id="MobiDB-lite"/>
    </source>
</evidence>
<evidence type="ECO:0000269" key="3">
    <source>
    </source>
</evidence>
<evidence type="ECO:0000269" key="4">
    <source ref="1"/>
</evidence>
<evidence type="ECO:0000305" key="5"/>
<organism>
    <name type="scientific">Lottia gigantea</name>
    <name type="common">Giant owl limpet</name>
    <dbReference type="NCBI Taxonomy" id="225164"/>
    <lineage>
        <taxon>Eukaryota</taxon>
        <taxon>Metazoa</taxon>
        <taxon>Spiralia</taxon>
        <taxon>Lophotrochozoa</taxon>
        <taxon>Mollusca</taxon>
        <taxon>Gastropoda</taxon>
        <taxon>Patellogastropoda</taxon>
        <taxon>Lottioidea</taxon>
        <taxon>Lottiidae</taxon>
        <taxon>Lottia</taxon>
    </lineage>
</organism>
<proteinExistence type="evidence at protein level"/>